<sequence length="200" mass="24081">MYCINTDCTYTKIAIEQLLHEKYFDDRRYCHSIKIYDLRFFKIEDVAYKLIQLFKERRKENIIFLCSDRFIHSKEKPRNIFFLDTKDSIRNWSRHLKKLRYCNSNLLICFLFLCGLYHISVFTGKKQVIIACIKKGFSFAEIVNFLNINARTLVNYLGGLTTYFILPYSDSLYKYIIDNIIASSTEEYHILLTNQRRYYV</sequence>
<evidence type="ECO:0000255" key="1"/>
<evidence type="ECO:0000305" key="2"/>
<comment type="subcellular location">
    <subcellularLocation>
        <location evidence="2">Membrane</location>
        <topology evidence="2">Single-pass membrane protein</topology>
    </subcellularLocation>
</comment>
<proteinExistence type="predicted"/>
<geneLocation type="plasmid">
    <name>F</name>
</geneLocation>
<protein>
    <recommendedName>
        <fullName>Uncharacterized membrane protein YuaF</fullName>
    </recommendedName>
</protein>
<name>YUAF_ECOLI</name>
<keyword id="KW-0472">Membrane</keyword>
<keyword id="KW-0614">Plasmid</keyword>
<keyword id="KW-0812">Transmembrane</keyword>
<keyword id="KW-1133">Transmembrane helix</keyword>
<feature type="chain" id="PRO_0000267218" description="Uncharacterized membrane protein YuaF">
    <location>
        <begin position="1"/>
        <end position="200"/>
    </location>
</feature>
<feature type="transmembrane region" description="Helical" evidence="1">
    <location>
        <begin position="104"/>
        <end position="124"/>
    </location>
</feature>
<accession>Q9JMT4</accession>
<reference key="1">
    <citation type="submission" date="2000-04" db="EMBL/GenBank/DDBJ databases">
        <title>Complete nucleotide sequence of the F plasmid: its implications for organization and diversification of plasmid genomes.</title>
        <authorList>
            <person name="Shimizu H."/>
            <person name="Saitoh Y."/>
            <person name="Suda Y."/>
            <person name="Uehara K."/>
            <person name="Sampei G."/>
            <person name="Mizobuchi K."/>
        </authorList>
    </citation>
    <scope>NUCLEOTIDE SEQUENCE [LARGE SCALE GENOMIC DNA]</scope>
    <source>
        <strain>K12 / CR63</strain>
    </source>
</reference>
<dbReference type="EMBL" id="AP001918">
    <property type="protein sequence ID" value="BAA97885.1"/>
    <property type="molecule type" value="Genomic_DNA"/>
</dbReference>
<dbReference type="RefSeq" id="NP_061394.1">
    <property type="nucleotide sequence ID" value="NC_002483.1"/>
</dbReference>
<dbReference type="RefSeq" id="WP_000271587.1">
    <property type="nucleotide sequence ID" value="NC_002483.1"/>
</dbReference>
<dbReference type="KEGG" id="ecoc:C3026_24175"/>
<dbReference type="PATRIC" id="fig|83333.107.peg.587"/>
<dbReference type="GO" id="GO:0016020">
    <property type="term" value="C:membrane"/>
    <property type="evidence" value="ECO:0007669"/>
    <property type="project" value="UniProtKB-SubCell"/>
</dbReference>
<gene>
    <name type="primary">yuaF</name>
    <name type="synonym">ybdB</name>
    <name type="ordered locus">ECOK12F015</name>
</gene>
<organism>
    <name type="scientific">Escherichia coli (strain K12)</name>
    <dbReference type="NCBI Taxonomy" id="83333"/>
    <lineage>
        <taxon>Bacteria</taxon>
        <taxon>Pseudomonadati</taxon>
        <taxon>Pseudomonadota</taxon>
        <taxon>Gammaproteobacteria</taxon>
        <taxon>Enterobacterales</taxon>
        <taxon>Enterobacteriaceae</taxon>
        <taxon>Escherichia</taxon>
    </lineage>
</organism>